<name>RL36_NOCFA</name>
<sequence length="37" mass="4403">MKVQPSVKKICEKCKVIRRHGRVMVICDNLRHKQRQG</sequence>
<keyword id="KW-1185">Reference proteome</keyword>
<keyword id="KW-0687">Ribonucleoprotein</keyword>
<keyword id="KW-0689">Ribosomal protein</keyword>
<proteinExistence type="inferred from homology"/>
<reference key="1">
    <citation type="journal article" date="2004" name="Proc. Natl. Acad. Sci. U.S.A.">
        <title>The complete genomic sequence of Nocardia farcinica IFM 10152.</title>
        <authorList>
            <person name="Ishikawa J."/>
            <person name="Yamashita A."/>
            <person name="Mikami Y."/>
            <person name="Hoshino Y."/>
            <person name="Kurita H."/>
            <person name="Hotta K."/>
            <person name="Shiba T."/>
            <person name="Hattori M."/>
        </authorList>
    </citation>
    <scope>NUCLEOTIDE SEQUENCE [LARGE SCALE GENOMIC DNA]</scope>
    <source>
        <strain>IFM 10152</strain>
    </source>
</reference>
<protein>
    <recommendedName>
        <fullName evidence="1">Large ribosomal subunit protein bL36</fullName>
    </recommendedName>
    <alternativeName>
        <fullName evidence="2">50S ribosomal protein L36</fullName>
    </alternativeName>
</protein>
<accession>Q5Z1L3</accession>
<comment type="similarity">
    <text evidence="1">Belongs to the bacterial ribosomal protein bL36 family.</text>
</comment>
<evidence type="ECO:0000255" key="1">
    <source>
        <dbReference type="HAMAP-Rule" id="MF_00251"/>
    </source>
</evidence>
<evidence type="ECO:0000305" key="2"/>
<organism>
    <name type="scientific">Nocardia farcinica (strain IFM 10152)</name>
    <dbReference type="NCBI Taxonomy" id="247156"/>
    <lineage>
        <taxon>Bacteria</taxon>
        <taxon>Bacillati</taxon>
        <taxon>Actinomycetota</taxon>
        <taxon>Actinomycetes</taxon>
        <taxon>Mycobacteriales</taxon>
        <taxon>Nocardiaceae</taxon>
        <taxon>Nocardia</taxon>
    </lineage>
</organism>
<dbReference type="EMBL" id="AP006618">
    <property type="protein sequence ID" value="BAD55678.1"/>
    <property type="molecule type" value="Genomic_DNA"/>
</dbReference>
<dbReference type="RefSeq" id="WP_011207363.1">
    <property type="nucleotide sequence ID" value="NC_006361.1"/>
</dbReference>
<dbReference type="SMR" id="Q5Z1L3"/>
<dbReference type="STRING" id="247156.NFA_8330"/>
<dbReference type="GeneID" id="96238014"/>
<dbReference type="KEGG" id="nfa:NFA_8330"/>
<dbReference type="eggNOG" id="COG0257">
    <property type="taxonomic scope" value="Bacteria"/>
</dbReference>
<dbReference type="HOGENOM" id="CLU_135723_6_2_11"/>
<dbReference type="OrthoDB" id="9802520at2"/>
<dbReference type="Proteomes" id="UP000006820">
    <property type="component" value="Chromosome"/>
</dbReference>
<dbReference type="GO" id="GO:0005737">
    <property type="term" value="C:cytoplasm"/>
    <property type="evidence" value="ECO:0007669"/>
    <property type="project" value="UniProtKB-ARBA"/>
</dbReference>
<dbReference type="GO" id="GO:1990904">
    <property type="term" value="C:ribonucleoprotein complex"/>
    <property type="evidence" value="ECO:0007669"/>
    <property type="project" value="UniProtKB-KW"/>
</dbReference>
<dbReference type="GO" id="GO:0005840">
    <property type="term" value="C:ribosome"/>
    <property type="evidence" value="ECO:0007669"/>
    <property type="project" value="UniProtKB-KW"/>
</dbReference>
<dbReference type="GO" id="GO:0003735">
    <property type="term" value="F:structural constituent of ribosome"/>
    <property type="evidence" value="ECO:0007669"/>
    <property type="project" value="InterPro"/>
</dbReference>
<dbReference type="GO" id="GO:0006412">
    <property type="term" value="P:translation"/>
    <property type="evidence" value="ECO:0007669"/>
    <property type="project" value="UniProtKB-UniRule"/>
</dbReference>
<dbReference type="HAMAP" id="MF_00251">
    <property type="entry name" value="Ribosomal_bL36"/>
    <property type="match status" value="1"/>
</dbReference>
<dbReference type="InterPro" id="IPR000473">
    <property type="entry name" value="Ribosomal_bL36"/>
</dbReference>
<dbReference type="InterPro" id="IPR035977">
    <property type="entry name" value="Ribosomal_bL36_sp"/>
</dbReference>
<dbReference type="NCBIfam" id="TIGR01022">
    <property type="entry name" value="rpmJ_bact"/>
    <property type="match status" value="1"/>
</dbReference>
<dbReference type="PANTHER" id="PTHR42888">
    <property type="entry name" value="50S RIBOSOMAL PROTEIN L36, CHLOROPLASTIC"/>
    <property type="match status" value="1"/>
</dbReference>
<dbReference type="PANTHER" id="PTHR42888:SF1">
    <property type="entry name" value="LARGE RIBOSOMAL SUBUNIT PROTEIN BL36C"/>
    <property type="match status" value="1"/>
</dbReference>
<dbReference type="Pfam" id="PF00444">
    <property type="entry name" value="Ribosomal_L36"/>
    <property type="match status" value="1"/>
</dbReference>
<dbReference type="SUPFAM" id="SSF57840">
    <property type="entry name" value="Ribosomal protein L36"/>
    <property type="match status" value="1"/>
</dbReference>
<dbReference type="PROSITE" id="PS00828">
    <property type="entry name" value="RIBOSOMAL_L36"/>
    <property type="match status" value="1"/>
</dbReference>
<gene>
    <name evidence="1" type="primary">rpmJ</name>
    <name type="ordered locus">NFA_8330</name>
</gene>
<feature type="chain" id="PRO_0000126227" description="Large ribosomal subunit protein bL36">
    <location>
        <begin position="1"/>
        <end position="37"/>
    </location>
</feature>